<reference key="1">
    <citation type="journal article" date="2003" name="Proc. Natl. Acad. Sci. U.S.A.">
        <title>Complete genome sequence and analysis of Wolinella succinogenes.</title>
        <authorList>
            <person name="Baar C."/>
            <person name="Eppinger M."/>
            <person name="Raddatz G."/>
            <person name="Simon J."/>
            <person name="Lanz C."/>
            <person name="Klimmek O."/>
            <person name="Nandakumar R."/>
            <person name="Gross R."/>
            <person name="Rosinus A."/>
            <person name="Keller H."/>
            <person name="Jagtap P."/>
            <person name="Linke B."/>
            <person name="Meyer F."/>
            <person name="Lederer H."/>
            <person name="Schuster S.C."/>
        </authorList>
    </citation>
    <scope>NUCLEOTIDE SEQUENCE [LARGE SCALE GENOMIC DNA]</scope>
    <source>
        <strain>ATCC 29543 / DSM 1740 / CCUG 13145 / JCM 31913 / LMG 7466 / NCTC 11488 / FDC 602W</strain>
    </source>
</reference>
<evidence type="ECO:0000255" key="1">
    <source>
        <dbReference type="HAMAP-Rule" id="MF_00388"/>
    </source>
</evidence>
<organism>
    <name type="scientific">Wolinella succinogenes (strain ATCC 29543 / DSM 1740 / CCUG 13145 / JCM 31913 / LMG 7466 / NCTC 11488 / FDC 602W)</name>
    <name type="common">Vibrio succinogenes</name>
    <dbReference type="NCBI Taxonomy" id="273121"/>
    <lineage>
        <taxon>Bacteria</taxon>
        <taxon>Pseudomonadati</taxon>
        <taxon>Campylobacterota</taxon>
        <taxon>Epsilonproteobacteria</taxon>
        <taxon>Campylobacterales</taxon>
        <taxon>Helicobacteraceae</taxon>
        <taxon>Wolinella</taxon>
    </lineage>
</organism>
<name>LPXC_WOLSU</name>
<dbReference type="EC" id="3.5.1.108" evidence="1"/>
<dbReference type="EMBL" id="BX571662">
    <property type="protein sequence ID" value="CAE11015.1"/>
    <property type="molecule type" value="Genomic_DNA"/>
</dbReference>
<dbReference type="RefSeq" id="WP_011139797.1">
    <property type="nucleotide sequence ID" value="NC_005090.1"/>
</dbReference>
<dbReference type="SMR" id="Q7M7X7"/>
<dbReference type="STRING" id="273121.WS2013"/>
<dbReference type="KEGG" id="wsu:WS2013"/>
<dbReference type="eggNOG" id="COG0774">
    <property type="taxonomic scope" value="Bacteria"/>
</dbReference>
<dbReference type="HOGENOM" id="CLU_046528_1_0_7"/>
<dbReference type="UniPathway" id="UPA00359">
    <property type="reaction ID" value="UER00478"/>
</dbReference>
<dbReference type="Proteomes" id="UP000000422">
    <property type="component" value="Chromosome"/>
</dbReference>
<dbReference type="GO" id="GO:0016020">
    <property type="term" value="C:membrane"/>
    <property type="evidence" value="ECO:0007669"/>
    <property type="project" value="GOC"/>
</dbReference>
<dbReference type="GO" id="GO:0046872">
    <property type="term" value="F:metal ion binding"/>
    <property type="evidence" value="ECO:0007669"/>
    <property type="project" value="UniProtKB-KW"/>
</dbReference>
<dbReference type="GO" id="GO:0103117">
    <property type="term" value="F:UDP-3-O-acyl-N-acetylglucosamine deacetylase activity"/>
    <property type="evidence" value="ECO:0007669"/>
    <property type="project" value="UniProtKB-UniRule"/>
</dbReference>
<dbReference type="GO" id="GO:0009245">
    <property type="term" value="P:lipid A biosynthetic process"/>
    <property type="evidence" value="ECO:0007669"/>
    <property type="project" value="UniProtKB-UniRule"/>
</dbReference>
<dbReference type="Gene3D" id="3.30.230.20">
    <property type="entry name" value="lpxc deacetylase, domain 1"/>
    <property type="match status" value="1"/>
</dbReference>
<dbReference type="Gene3D" id="3.30.1700.10">
    <property type="entry name" value="lpxc deacetylase, domain 2"/>
    <property type="match status" value="1"/>
</dbReference>
<dbReference type="HAMAP" id="MF_00388">
    <property type="entry name" value="LpxC"/>
    <property type="match status" value="1"/>
</dbReference>
<dbReference type="InterPro" id="IPR020568">
    <property type="entry name" value="Ribosomal_Su5_D2-typ_SF"/>
</dbReference>
<dbReference type="InterPro" id="IPR004463">
    <property type="entry name" value="UDP-acyl_GlcNac_deAcase"/>
</dbReference>
<dbReference type="InterPro" id="IPR011334">
    <property type="entry name" value="UDP-acyl_GlcNac_deAcase_C"/>
</dbReference>
<dbReference type="InterPro" id="IPR015870">
    <property type="entry name" value="UDP-acyl_N-AcGlcN_deAcase_N"/>
</dbReference>
<dbReference type="NCBIfam" id="TIGR00325">
    <property type="entry name" value="lpxC"/>
    <property type="match status" value="1"/>
</dbReference>
<dbReference type="PANTHER" id="PTHR33694">
    <property type="entry name" value="UDP-3-O-ACYL-N-ACETYLGLUCOSAMINE DEACETYLASE 1, MITOCHONDRIAL-RELATED"/>
    <property type="match status" value="1"/>
</dbReference>
<dbReference type="PANTHER" id="PTHR33694:SF1">
    <property type="entry name" value="UDP-3-O-ACYL-N-ACETYLGLUCOSAMINE DEACETYLASE 1, MITOCHONDRIAL-RELATED"/>
    <property type="match status" value="1"/>
</dbReference>
<dbReference type="Pfam" id="PF03331">
    <property type="entry name" value="LpxC"/>
    <property type="match status" value="1"/>
</dbReference>
<dbReference type="SUPFAM" id="SSF54211">
    <property type="entry name" value="Ribosomal protein S5 domain 2-like"/>
    <property type="match status" value="2"/>
</dbReference>
<accession>Q7M7X7</accession>
<comment type="function">
    <text evidence="1">Catalyzes the hydrolysis of UDP-3-O-myristoyl-N-acetylglucosamine to form UDP-3-O-myristoylglucosamine and acetate, the committed step in lipid A biosynthesis.</text>
</comment>
<comment type="catalytic activity">
    <reaction evidence="1">
        <text>a UDP-3-O-[(3R)-3-hydroxyacyl]-N-acetyl-alpha-D-glucosamine + H2O = a UDP-3-O-[(3R)-3-hydroxyacyl]-alpha-D-glucosamine + acetate</text>
        <dbReference type="Rhea" id="RHEA:67816"/>
        <dbReference type="ChEBI" id="CHEBI:15377"/>
        <dbReference type="ChEBI" id="CHEBI:30089"/>
        <dbReference type="ChEBI" id="CHEBI:137740"/>
        <dbReference type="ChEBI" id="CHEBI:173225"/>
        <dbReference type="EC" id="3.5.1.108"/>
    </reaction>
</comment>
<comment type="cofactor">
    <cofactor evidence="1">
        <name>Zn(2+)</name>
        <dbReference type="ChEBI" id="CHEBI:29105"/>
    </cofactor>
</comment>
<comment type="pathway">
    <text evidence="1">Glycolipid biosynthesis; lipid IV(A) biosynthesis; lipid IV(A) from (3R)-3-hydroxytetradecanoyl-[acyl-carrier-protein] and UDP-N-acetyl-alpha-D-glucosamine: step 2/6.</text>
</comment>
<comment type="similarity">
    <text evidence="1">Belongs to the LpxC family.</text>
</comment>
<feature type="chain" id="PRO_0000253701" description="UDP-3-O-acyl-N-acetylglucosamine deacetylase">
    <location>
        <begin position="1"/>
        <end position="298"/>
    </location>
</feature>
<feature type="active site" description="Proton donor" evidence="1">
    <location>
        <position position="259"/>
    </location>
</feature>
<feature type="binding site" evidence="1">
    <location>
        <position position="75"/>
    </location>
    <ligand>
        <name>Zn(2+)</name>
        <dbReference type="ChEBI" id="CHEBI:29105"/>
    </ligand>
</feature>
<feature type="binding site" evidence="1">
    <location>
        <position position="232"/>
    </location>
    <ligand>
        <name>Zn(2+)</name>
        <dbReference type="ChEBI" id="CHEBI:29105"/>
    </ligand>
</feature>
<feature type="binding site" evidence="1">
    <location>
        <position position="236"/>
    </location>
    <ligand>
        <name>Zn(2+)</name>
        <dbReference type="ChEBI" id="CHEBI:29105"/>
    </ligand>
</feature>
<gene>
    <name evidence="1" type="primary">lpxC</name>
    <name type="ordered locus">WS2013</name>
</gene>
<keyword id="KW-0378">Hydrolase</keyword>
<keyword id="KW-0441">Lipid A biosynthesis</keyword>
<keyword id="KW-0444">Lipid biosynthesis</keyword>
<keyword id="KW-0443">Lipid metabolism</keyword>
<keyword id="KW-0479">Metal-binding</keyword>
<keyword id="KW-1185">Reference proteome</keyword>
<keyword id="KW-0862">Zinc</keyword>
<proteinExistence type="inferred from homology"/>
<protein>
    <recommendedName>
        <fullName evidence="1">UDP-3-O-acyl-N-acetylglucosamine deacetylase</fullName>
        <shortName evidence="1">UDP-3-O-acyl-GlcNAc deacetylase</shortName>
        <ecNumber evidence="1">3.5.1.108</ecNumber>
    </recommendedName>
    <alternativeName>
        <fullName evidence="1">UDP-3-O-[R-3-hydroxymyristoyl]-N-acetylglucosamine deacetylase</fullName>
    </alternativeName>
</protein>
<sequence length="298" mass="32948">MKQKTIGKAVEIVGIGLHKGVPVHLVLEPLPENSGLVFFRRDLGVSIPLEPKNVIDTTMATVIGKEGAKISTIEHLLSAIYAYGIDNLKISLDNEEAPIMDGSSIGFCMLLDEAGIVSQNAPKRAIKIKSPIEVKDGEKFVRVEPSEVSLFDFSIEFDHPAIREQSYRFTFSTKAYKEEIARARTFGFVHEVQYLRSKGLALGGSLANAIVLDETGILNKEGLRYKEEFVRHKILDAIGDMALLGIPLIGTYVSYAGSHKLNHLLTKELLKEEESYEIVSLEDEAEAIEIEKVYATGE</sequence>